<name>HSLV_PASMU</name>
<feature type="initiator methionine" description="Removed" evidence="1">
    <location>
        <position position="1"/>
    </location>
</feature>
<feature type="chain" id="PRO_0000148129" description="ATP-dependent protease subunit HslV">
    <location>
        <begin position="2"/>
        <end position="176"/>
    </location>
</feature>
<feature type="active site" evidence="2">
    <location>
        <position position="2"/>
    </location>
</feature>
<feature type="binding site" evidence="2">
    <location>
        <position position="158"/>
    </location>
    <ligand>
        <name>Na(+)</name>
        <dbReference type="ChEBI" id="CHEBI:29101"/>
    </ligand>
</feature>
<feature type="binding site" evidence="2">
    <location>
        <position position="161"/>
    </location>
    <ligand>
        <name>Na(+)</name>
        <dbReference type="ChEBI" id="CHEBI:29101"/>
    </ligand>
</feature>
<feature type="binding site" evidence="2">
    <location>
        <position position="164"/>
    </location>
    <ligand>
        <name>Na(+)</name>
        <dbReference type="ChEBI" id="CHEBI:29101"/>
    </ligand>
</feature>
<proteinExistence type="inferred from homology"/>
<reference key="1">
    <citation type="journal article" date="2001" name="Proc. Natl. Acad. Sci. U.S.A.">
        <title>Complete genomic sequence of Pasteurella multocida Pm70.</title>
        <authorList>
            <person name="May B.J."/>
            <person name="Zhang Q."/>
            <person name="Li L.L."/>
            <person name="Paustian M.L."/>
            <person name="Whittam T.S."/>
            <person name="Kapur V."/>
        </authorList>
    </citation>
    <scope>NUCLEOTIDE SEQUENCE [LARGE SCALE GENOMIC DNA]</scope>
    <source>
        <strain>Pm70</strain>
    </source>
</reference>
<organism>
    <name type="scientific">Pasteurella multocida (strain Pm70)</name>
    <dbReference type="NCBI Taxonomy" id="272843"/>
    <lineage>
        <taxon>Bacteria</taxon>
        <taxon>Pseudomonadati</taxon>
        <taxon>Pseudomonadota</taxon>
        <taxon>Gammaproteobacteria</taxon>
        <taxon>Pasteurellales</taxon>
        <taxon>Pasteurellaceae</taxon>
        <taxon>Pasteurella</taxon>
    </lineage>
</organism>
<gene>
    <name evidence="2" type="primary">hslV</name>
    <name type="ordered locus">PM1749</name>
</gene>
<protein>
    <recommendedName>
        <fullName evidence="2">ATP-dependent protease subunit HslV</fullName>
        <ecNumber evidence="2">3.4.25.2</ecNumber>
    </recommendedName>
</protein>
<accession>P57969</accession>
<sequence>MTTIVSVRRNGQVVVGGDGQVSLGNTVMKGNARKVRRLYNGKVLAGFAGGTADAFTLFELFERKLEMHQGHLLKSAVELAKDWRTDRALRKLEAMLIVADEKESLIITGIGDVVQPEADQILAIGSGGNFALSAARALVENTELSAREIVEKSLKIAGDICVYTNTHFTIEELPNS</sequence>
<dbReference type="EC" id="3.4.25.2" evidence="2"/>
<dbReference type="EMBL" id="AE004439">
    <property type="protein sequence ID" value="AAK03833.1"/>
    <property type="molecule type" value="Genomic_DNA"/>
</dbReference>
<dbReference type="RefSeq" id="WP_005724701.1">
    <property type="nucleotide sequence ID" value="NC_002663.1"/>
</dbReference>
<dbReference type="SMR" id="P57969"/>
<dbReference type="STRING" id="272843.PM1749"/>
<dbReference type="MEROPS" id="T01.007"/>
<dbReference type="EnsemblBacteria" id="AAK03833">
    <property type="protein sequence ID" value="AAK03833"/>
    <property type="gene ID" value="PM1749"/>
</dbReference>
<dbReference type="GeneID" id="77207099"/>
<dbReference type="KEGG" id="pmu:PM1749"/>
<dbReference type="HOGENOM" id="CLU_093872_1_0_6"/>
<dbReference type="OrthoDB" id="9804884at2"/>
<dbReference type="Proteomes" id="UP000000809">
    <property type="component" value="Chromosome"/>
</dbReference>
<dbReference type="GO" id="GO:0009376">
    <property type="term" value="C:HslUV protease complex"/>
    <property type="evidence" value="ECO:0007669"/>
    <property type="project" value="UniProtKB-UniRule"/>
</dbReference>
<dbReference type="GO" id="GO:0005839">
    <property type="term" value="C:proteasome core complex"/>
    <property type="evidence" value="ECO:0007669"/>
    <property type="project" value="InterPro"/>
</dbReference>
<dbReference type="GO" id="GO:0046872">
    <property type="term" value="F:metal ion binding"/>
    <property type="evidence" value="ECO:0007669"/>
    <property type="project" value="UniProtKB-KW"/>
</dbReference>
<dbReference type="GO" id="GO:0004298">
    <property type="term" value="F:threonine-type endopeptidase activity"/>
    <property type="evidence" value="ECO:0007669"/>
    <property type="project" value="UniProtKB-KW"/>
</dbReference>
<dbReference type="GO" id="GO:0051603">
    <property type="term" value="P:proteolysis involved in protein catabolic process"/>
    <property type="evidence" value="ECO:0007669"/>
    <property type="project" value="InterPro"/>
</dbReference>
<dbReference type="CDD" id="cd01913">
    <property type="entry name" value="protease_HslV"/>
    <property type="match status" value="1"/>
</dbReference>
<dbReference type="FunFam" id="3.60.20.10:FF:000002">
    <property type="entry name" value="ATP-dependent protease subunit HslV"/>
    <property type="match status" value="1"/>
</dbReference>
<dbReference type="Gene3D" id="3.60.20.10">
    <property type="entry name" value="Glutamine Phosphoribosylpyrophosphate, subunit 1, domain 1"/>
    <property type="match status" value="1"/>
</dbReference>
<dbReference type="HAMAP" id="MF_00248">
    <property type="entry name" value="HslV"/>
    <property type="match status" value="1"/>
</dbReference>
<dbReference type="InterPro" id="IPR022281">
    <property type="entry name" value="ATP-dep_Prtase_HsIV_su"/>
</dbReference>
<dbReference type="InterPro" id="IPR029055">
    <property type="entry name" value="Ntn_hydrolases_N"/>
</dbReference>
<dbReference type="InterPro" id="IPR001353">
    <property type="entry name" value="Proteasome_sua/b"/>
</dbReference>
<dbReference type="InterPro" id="IPR023333">
    <property type="entry name" value="Proteasome_suB-type"/>
</dbReference>
<dbReference type="NCBIfam" id="TIGR03692">
    <property type="entry name" value="ATP_dep_HslV"/>
    <property type="match status" value="1"/>
</dbReference>
<dbReference type="NCBIfam" id="NF003964">
    <property type="entry name" value="PRK05456.1"/>
    <property type="match status" value="1"/>
</dbReference>
<dbReference type="PANTHER" id="PTHR32194:SF0">
    <property type="entry name" value="ATP-DEPENDENT PROTEASE SUBUNIT HSLV"/>
    <property type="match status" value="1"/>
</dbReference>
<dbReference type="PANTHER" id="PTHR32194">
    <property type="entry name" value="METALLOPROTEASE TLDD"/>
    <property type="match status" value="1"/>
</dbReference>
<dbReference type="Pfam" id="PF00227">
    <property type="entry name" value="Proteasome"/>
    <property type="match status" value="1"/>
</dbReference>
<dbReference type="PIRSF" id="PIRSF039093">
    <property type="entry name" value="HslV"/>
    <property type="match status" value="1"/>
</dbReference>
<dbReference type="SUPFAM" id="SSF56235">
    <property type="entry name" value="N-terminal nucleophile aminohydrolases (Ntn hydrolases)"/>
    <property type="match status" value="1"/>
</dbReference>
<dbReference type="PROSITE" id="PS51476">
    <property type="entry name" value="PROTEASOME_BETA_2"/>
    <property type="match status" value="1"/>
</dbReference>
<keyword id="KW-0021">Allosteric enzyme</keyword>
<keyword id="KW-0963">Cytoplasm</keyword>
<keyword id="KW-0378">Hydrolase</keyword>
<keyword id="KW-0479">Metal-binding</keyword>
<keyword id="KW-0645">Protease</keyword>
<keyword id="KW-1185">Reference proteome</keyword>
<keyword id="KW-0915">Sodium</keyword>
<keyword id="KW-0888">Threonine protease</keyword>
<comment type="function">
    <text evidence="2">Protease subunit of a proteasome-like degradation complex believed to be a general protein degrading machinery.</text>
</comment>
<comment type="catalytic activity">
    <reaction evidence="2">
        <text>ATP-dependent cleavage of peptide bonds with broad specificity.</text>
        <dbReference type="EC" id="3.4.25.2"/>
    </reaction>
</comment>
<comment type="activity regulation">
    <text evidence="2">Allosterically activated by HslU binding.</text>
</comment>
<comment type="subunit">
    <text evidence="2">A double ring-shaped homohexamer of HslV is capped on each side by a ring-shaped HslU homohexamer. The assembly of the HslU/HslV complex is dependent on binding of ATP.</text>
</comment>
<comment type="subcellular location">
    <subcellularLocation>
        <location evidence="2">Cytoplasm</location>
    </subcellularLocation>
</comment>
<comment type="similarity">
    <text evidence="2">Belongs to the peptidase T1B family. HslV subfamily.</text>
</comment>
<evidence type="ECO:0000250" key="1"/>
<evidence type="ECO:0000255" key="2">
    <source>
        <dbReference type="HAMAP-Rule" id="MF_00248"/>
    </source>
</evidence>